<organismHost>
    <name type="scientific">Sus scrofa</name>
    <name type="common">Pig</name>
    <dbReference type="NCBI Taxonomy" id="9823"/>
</organismHost>
<name>PRIM_SUHVK</name>
<keyword id="KW-0235">DNA replication</keyword>
<keyword id="KW-1048">Host nucleus</keyword>
<keyword id="KW-0479">Metal-binding</keyword>
<keyword id="KW-0808">Transferase</keyword>
<keyword id="KW-0862">Zinc</keyword>
<keyword id="KW-0863">Zinc-finger</keyword>
<feature type="chain" id="PRO_0000116114" description="DNA primase">
    <location>
        <begin position="1"/>
        <end position="962"/>
    </location>
</feature>
<feature type="zinc finger region" description="CHC2-type" evidence="1">
    <location>
        <begin position="894"/>
        <end position="932"/>
    </location>
</feature>
<feature type="site" description="Essential for primase activity" evidence="1">
    <location>
        <position position="534"/>
    </location>
</feature>
<feature type="site" description="Essential for primase activity" evidence="1">
    <location>
        <position position="536"/>
    </location>
</feature>
<reference key="1">
    <citation type="journal article" date="1995" name="J. Virol.">
        <title>Pseudorabies virus and equine herpesvirus 1 share a nonessential gene which is absent in other herpesviruses and located adjacent to a highly conserved gene cluster.</title>
        <authorList>
            <person name="Baumeister J."/>
            <person name="Klupp B.G."/>
            <person name="Mettenleiter T.C."/>
        </authorList>
    </citation>
    <scope>NUCLEOTIDE SEQUENCE [GENOMIC DNA]</scope>
</reference>
<accession>Q85228</accession>
<proteinExistence type="inferred from homology"/>
<dbReference type="EC" id="2.7.7.-" evidence="1"/>
<dbReference type="EMBL" id="X87246">
    <property type="protein sequence ID" value="CAA60690.1"/>
    <property type="molecule type" value="Genomic_DNA"/>
</dbReference>
<dbReference type="IntAct" id="Q85228">
    <property type="interactions" value="1"/>
</dbReference>
<dbReference type="GO" id="GO:0042025">
    <property type="term" value="C:host cell nucleus"/>
    <property type="evidence" value="ECO:0007669"/>
    <property type="project" value="UniProtKB-SubCell"/>
</dbReference>
<dbReference type="GO" id="GO:0003899">
    <property type="term" value="F:DNA-directed RNA polymerase activity"/>
    <property type="evidence" value="ECO:0007669"/>
    <property type="project" value="InterPro"/>
</dbReference>
<dbReference type="GO" id="GO:0008270">
    <property type="term" value="F:zinc ion binding"/>
    <property type="evidence" value="ECO:0007669"/>
    <property type="project" value="UniProtKB-KW"/>
</dbReference>
<dbReference type="GO" id="GO:0039686">
    <property type="term" value="P:bidirectional double-stranded viral DNA replication"/>
    <property type="evidence" value="ECO:0007669"/>
    <property type="project" value="InterPro"/>
</dbReference>
<dbReference type="GO" id="GO:0006260">
    <property type="term" value="P:DNA replication"/>
    <property type="evidence" value="ECO:0007669"/>
    <property type="project" value="UniProtKB-KW"/>
</dbReference>
<dbReference type="HAMAP" id="MF_04011">
    <property type="entry name" value="HSV_PRIM"/>
    <property type="match status" value="1"/>
</dbReference>
<dbReference type="InterPro" id="IPR033685">
    <property type="entry name" value="HSV_PRIM"/>
</dbReference>
<dbReference type="Pfam" id="PF03121">
    <property type="entry name" value="Herpes_UL52"/>
    <property type="match status" value="1"/>
</dbReference>
<gene>
    <name type="primary">UL52</name>
</gene>
<evidence type="ECO:0000255" key="1">
    <source>
        <dbReference type="HAMAP-Rule" id="MF_04011"/>
    </source>
</evidence>
<evidence type="ECO:0000305" key="2"/>
<protein>
    <recommendedName>
        <fullName evidence="1">DNA primase</fullName>
        <ecNumber evidence="1">2.7.7.-</ecNumber>
    </recommendedName>
</protein>
<organism>
    <name type="scientific">Suid herpesvirus 1 (strain Kaplan)</name>
    <name type="common">SuHV-1</name>
    <name type="synonym">Pseudorabies virus (strain Kaplan)</name>
    <dbReference type="NCBI Taxonomy" id="33703"/>
    <lineage>
        <taxon>Viruses</taxon>
        <taxon>Duplodnaviria</taxon>
        <taxon>Heunggongvirae</taxon>
        <taxon>Peploviricota</taxon>
        <taxon>Herviviricetes</taxon>
        <taxon>Herpesvirales</taxon>
        <taxon>Orthoherpesviridae</taxon>
        <taxon>Alphaherpesvirinae</taxon>
        <taxon>Varicellovirus</taxon>
        <taxon>Varicellovirus suidalpha1</taxon>
        <taxon>Suid herpesvirus 1</taxon>
    </lineage>
</organism>
<comment type="function">
    <text evidence="1">Essential component of the helicase/primase complex. Unwinds the DNA at the replication forks and generates single-stranded DNA for both leading and lagging strand synthesis. The primase initiates primer synthesis and thereby produces large amount of short RNA primers on the lagging strand that the polymerase elongates using dNTPs.</text>
</comment>
<comment type="subunit">
    <text evidence="1">Associates with the helicase and the primase-associated factor to form the helicase-primase factor.</text>
</comment>
<comment type="subcellular location">
    <subcellularLocation>
        <location evidence="1">Host nucleus</location>
    </subcellularLocation>
    <text evidence="1">Requires the presence of the primase associated factor to properly localize in the host cell nucleus.</text>
</comment>
<comment type="similarity">
    <text evidence="1">Belongs to the herpesviridae DNA primase family.</text>
</comment>
<comment type="caution">
    <text evidence="2">It is uncertain whether Met-1 or Met-5 is the initiator.</text>
</comment>
<sequence length="962" mass="103329">MPPSMIRVLYATDGCAITYSLMLLTGQEPSGAVYVVSYAWDGAGLDEAFSLPGERAEAELLARRPGVTFCLTGHVASVRVRPVFVAAATPAVVRALCRGEPLAARDVLEAMDEAATFALHDGLIAALTMVLEQVRPRTGNAEYAPERPLRSIAVGRRGLTSLFVHHETQTLAAFRRLYGNHNTPFWYVARFGPEEKTLVLATRLHLFHPRPAYDLRALKDLLLTYNPRVDPNPSGLDPAGLLSFAALSRFCCLSGYARGPAAAHAARYVDERVRADRAEMGVLRDYISHDRGSLKLPDREFVTYVYLAHFESFNRARLREHLDAVNVTDPAAPVGRSPLGERAAAAFFRHVRAQLNIRDYVAQNVTPSVARLAPAMGAGYVEDRTYAALAADAPRGLCDAAAGLARRVTAVEERLAPHGWVRAPDEEQQQPGADGAVLRRLLELAAAPGGGRARTALGALLGLPDACPPAPVYRVELAHRRQAFAVLAGDAWGRATARRDAAPEMAAHEPAAQMYVSRHEVFNARLAVTNIVLDVDFRLARPVPAGTLEAAMRGFRRAVLDALALLFPEADGDWAAHPCYVYKSACPPGGALAAAAGSASAASSDDGLEEAPWDDDAALADFGAAPGDEDWADWDAGVPAEVYTCDDDEVGVGIGGAGGDPGASALVRAPVPADERPPCGCRAKMGFRVCTPVPSPYAVAGADTVRGLARVLQQAVLLERDFIEPMGPYLQDFTFVDTGVYAHGRSLRLPFFAKVDGGGCHGRLLPFGDAPPGFDDPRNFHFHARPAHAVTRVLHSLGGEYESFFERKAARNREAFFARRTPLADMLRGLAVDAEDRRALEAFVADVAMAPVLRHLDAHFNGRAHEYAGATAQRVVAKPDWVLFQLCGSARFSCLRARHARSPPARTFVALSVDAHDRLCISLSQQCFATKCGSNATRTIFTAEVGQSCSSAGARCTSSSSG</sequence>